<comment type="function">
    <text evidence="1">Bifunctional enzyme with both catalase and broad-spectrum peroxidase activity.</text>
</comment>
<comment type="catalytic activity">
    <reaction evidence="1">
        <text>H2O2 + AH2 = A + 2 H2O</text>
        <dbReference type="Rhea" id="RHEA:30275"/>
        <dbReference type="ChEBI" id="CHEBI:13193"/>
        <dbReference type="ChEBI" id="CHEBI:15377"/>
        <dbReference type="ChEBI" id="CHEBI:16240"/>
        <dbReference type="ChEBI" id="CHEBI:17499"/>
        <dbReference type="EC" id="1.11.1.21"/>
    </reaction>
</comment>
<comment type="catalytic activity">
    <reaction evidence="1">
        <text>2 H2O2 = O2 + 2 H2O</text>
        <dbReference type="Rhea" id="RHEA:20309"/>
        <dbReference type="ChEBI" id="CHEBI:15377"/>
        <dbReference type="ChEBI" id="CHEBI:15379"/>
        <dbReference type="ChEBI" id="CHEBI:16240"/>
        <dbReference type="EC" id="1.11.1.21"/>
    </reaction>
</comment>
<comment type="cofactor">
    <cofactor evidence="1">
        <name>heme b</name>
        <dbReference type="ChEBI" id="CHEBI:60344"/>
    </cofactor>
    <text evidence="1">Binds 1 heme b (iron(II)-protoporphyrin IX) group per dimer.</text>
</comment>
<comment type="subunit">
    <text evidence="1">Homodimer or homotetramer.</text>
</comment>
<comment type="PTM">
    <text evidence="1">Formation of the three residue Trp-Tyr-Met cross-link is important for the catalase, but not the peroxidase activity of the enzyme.</text>
</comment>
<comment type="similarity">
    <text evidence="1">Belongs to the peroxidase family. Peroxidase/catalase subfamily.</text>
</comment>
<protein>
    <recommendedName>
        <fullName evidence="1">Catalase-peroxidase</fullName>
        <shortName evidence="1">CP</shortName>
        <ecNumber evidence="1">1.11.1.21</ecNumber>
    </recommendedName>
    <alternativeName>
        <fullName evidence="1">Peroxidase/catalase</fullName>
    </alternativeName>
</protein>
<organism>
    <name type="scientific">Escherichia coli (strain ATCC 8739 / DSM 1576 / NBRC 3972 / NCIMB 8545 / WDCM 00012 / Crooks)</name>
    <dbReference type="NCBI Taxonomy" id="481805"/>
    <lineage>
        <taxon>Bacteria</taxon>
        <taxon>Pseudomonadati</taxon>
        <taxon>Pseudomonadota</taxon>
        <taxon>Gammaproteobacteria</taxon>
        <taxon>Enterobacterales</taxon>
        <taxon>Enterobacteriaceae</taxon>
        <taxon>Escherichia</taxon>
    </lineage>
</organism>
<dbReference type="EC" id="1.11.1.21" evidence="1"/>
<dbReference type="EMBL" id="CP000946">
    <property type="protein sequence ID" value="ACA79672.1"/>
    <property type="molecule type" value="Genomic_DNA"/>
</dbReference>
<dbReference type="RefSeq" id="WP_001295695.1">
    <property type="nucleotide sequence ID" value="NZ_MTFT01000042.1"/>
</dbReference>
<dbReference type="SMR" id="B1IVD5"/>
<dbReference type="KEGG" id="ecl:EcolC_4073"/>
<dbReference type="HOGENOM" id="CLU_025424_2_0_6"/>
<dbReference type="BRENDA" id="1.11.1.21">
    <property type="organism ID" value="2026"/>
</dbReference>
<dbReference type="GO" id="GO:0005829">
    <property type="term" value="C:cytosol"/>
    <property type="evidence" value="ECO:0007669"/>
    <property type="project" value="TreeGrafter"/>
</dbReference>
<dbReference type="GO" id="GO:0004096">
    <property type="term" value="F:catalase activity"/>
    <property type="evidence" value="ECO:0007669"/>
    <property type="project" value="UniProtKB-UniRule"/>
</dbReference>
<dbReference type="GO" id="GO:0020037">
    <property type="term" value="F:heme binding"/>
    <property type="evidence" value="ECO:0007669"/>
    <property type="project" value="InterPro"/>
</dbReference>
<dbReference type="GO" id="GO:0046872">
    <property type="term" value="F:metal ion binding"/>
    <property type="evidence" value="ECO:0007669"/>
    <property type="project" value="UniProtKB-KW"/>
</dbReference>
<dbReference type="GO" id="GO:0070301">
    <property type="term" value="P:cellular response to hydrogen peroxide"/>
    <property type="evidence" value="ECO:0007669"/>
    <property type="project" value="TreeGrafter"/>
</dbReference>
<dbReference type="GO" id="GO:0042744">
    <property type="term" value="P:hydrogen peroxide catabolic process"/>
    <property type="evidence" value="ECO:0007669"/>
    <property type="project" value="UniProtKB-KW"/>
</dbReference>
<dbReference type="CDD" id="cd08200">
    <property type="entry name" value="catalase_peroxidase_2"/>
    <property type="match status" value="1"/>
</dbReference>
<dbReference type="FunFam" id="1.10.420.10:FF:000002">
    <property type="entry name" value="Catalase-peroxidase"/>
    <property type="match status" value="1"/>
</dbReference>
<dbReference type="FunFam" id="1.10.420.10:FF:000004">
    <property type="entry name" value="Catalase-peroxidase"/>
    <property type="match status" value="1"/>
</dbReference>
<dbReference type="FunFam" id="1.10.520.10:FF:000002">
    <property type="entry name" value="Catalase-peroxidase"/>
    <property type="match status" value="1"/>
</dbReference>
<dbReference type="Gene3D" id="1.10.520.10">
    <property type="match status" value="2"/>
</dbReference>
<dbReference type="Gene3D" id="1.10.420.10">
    <property type="entry name" value="Peroxidase, domain 2"/>
    <property type="match status" value="2"/>
</dbReference>
<dbReference type="HAMAP" id="MF_01961">
    <property type="entry name" value="Catal_peroxid"/>
    <property type="match status" value="1"/>
</dbReference>
<dbReference type="InterPro" id="IPR000763">
    <property type="entry name" value="Catalase_peroxidase"/>
</dbReference>
<dbReference type="InterPro" id="IPR002016">
    <property type="entry name" value="Haem_peroxidase"/>
</dbReference>
<dbReference type="InterPro" id="IPR010255">
    <property type="entry name" value="Haem_peroxidase_sf"/>
</dbReference>
<dbReference type="InterPro" id="IPR019794">
    <property type="entry name" value="Peroxidases_AS"/>
</dbReference>
<dbReference type="InterPro" id="IPR019793">
    <property type="entry name" value="Peroxidases_heam-ligand_BS"/>
</dbReference>
<dbReference type="NCBIfam" id="TIGR00198">
    <property type="entry name" value="cat_per_HPI"/>
    <property type="match status" value="1"/>
</dbReference>
<dbReference type="NCBIfam" id="NF011635">
    <property type="entry name" value="PRK15061.1"/>
    <property type="match status" value="1"/>
</dbReference>
<dbReference type="PANTHER" id="PTHR30555:SF0">
    <property type="entry name" value="CATALASE-PEROXIDASE"/>
    <property type="match status" value="1"/>
</dbReference>
<dbReference type="PANTHER" id="PTHR30555">
    <property type="entry name" value="HYDROPEROXIDASE I, BIFUNCTIONAL CATALASE-PEROXIDASE"/>
    <property type="match status" value="1"/>
</dbReference>
<dbReference type="Pfam" id="PF00141">
    <property type="entry name" value="peroxidase"/>
    <property type="match status" value="2"/>
</dbReference>
<dbReference type="PRINTS" id="PR00460">
    <property type="entry name" value="BPEROXIDASE"/>
</dbReference>
<dbReference type="PRINTS" id="PR00458">
    <property type="entry name" value="PEROXIDASE"/>
</dbReference>
<dbReference type="SUPFAM" id="SSF48113">
    <property type="entry name" value="Heme-dependent peroxidases"/>
    <property type="match status" value="2"/>
</dbReference>
<dbReference type="PROSITE" id="PS00435">
    <property type="entry name" value="PEROXIDASE_1"/>
    <property type="match status" value="1"/>
</dbReference>
<dbReference type="PROSITE" id="PS00436">
    <property type="entry name" value="PEROXIDASE_2"/>
    <property type="match status" value="1"/>
</dbReference>
<dbReference type="PROSITE" id="PS50873">
    <property type="entry name" value="PEROXIDASE_4"/>
    <property type="match status" value="1"/>
</dbReference>
<gene>
    <name evidence="1" type="primary">katG</name>
    <name type="ordered locus">EcolC_4073</name>
</gene>
<evidence type="ECO:0000255" key="1">
    <source>
        <dbReference type="HAMAP-Rule" id="MF_01961"/>
    </source>
</evidence>
<evidence type="ECO:0000256" key="2">
    <source>
        <dbReference type="SAM" id="MobiDB-lite"/>
    </source>
</evidence>
<reference key="1">
    <citation type="submission" date="2008-02" db="EMBL/GenBank/DDBJ databases">
        <title>Complete sequence of Escherichia coli C str. ATCC 8739.</title>
        <authorList>
            <person name="Copeland A."/>
            <person name="Lucas S."/>
            <person name="Lapidus A."/>
            <person name="Glavina del Rio T."/>
            <person name="Dalin E."/>
            <person name="Tice H."/>
            <person name="Bruce D."/>
            <person name="Goodwin L."/>
            <person name="Pitluck S."/>
            <person name="Kiss H."/>
            <person name="Brettin T."/>
            <person name="Detter J.C."/>
            <person name="Han C."/>
            <person name="Kuske C.R."/>
            <person name="Schmutz J."/>
            <person name="Larimer F."/>
            <person name="Land M."/>
            <person name="Hauser L."/>
            <person name="Kyrpides N."/>
            <person name="Mikhailova N."/>
            <person name="Ingram L."/>
            <person name="Richardson P."/>
        </authorList>
    </citation>
    <scope>NUCLEOTIDE SEQUENCE [LARGE SCALE GENOMIC DNA]</scope>
    <source>
        <strain>ATCC 8739 / DSM 1576 / NBRC 3972 / NCIMB 8545 / WDCM 00012 / Crooks</strain>
    </source>
</reference>
<proteinExistence type="inferred from homology"/>
<name>KATG_ECOLC</name>
<sequence>MSTSDDIHNTTATGKCPFHQGGHDQSAGAGTTTRDWWPNQLRVDLLNQHSNRSNPLGEDFDYRKEFSKLDYYGLKKDLKALLTESQPWWPADWGSYAGLFIRMAWHGAGTYRSIDGRGGAGRGQQRFAPLNSWPDNVSLDKARRLLWPIKQKYGQKISWADLFILAGNVALENSGFRTFGFGAGREDVWEPDLDVNWGDEKAWLTHRHPEALAKAPLGATEMGLIYVNPEGPDHSGEPLSAAAAIRATFGNMGMNDEETVALIAGGHTLGKTHGAGPTSNVGPDPEAAPIEEQGLGWASTYGSGVGADAITSGLEVVWTQTPTQWSNYFFENLFKYEWVQTRSPAGAIQFEAVDAPEIIPDPFDPSKKRKPTMLVTDLTLRFDPEFEKISRRFLNDPQAFNEAFARAWFKLTHRDMGPKSRYIGPEVPKEDLIWQDPLPQPIYNPTEQDIIDLKFAIADSGLSVSELVSVAWASASTFRGGDKRGGANGARLALMPQRDWDVNAAAVRALPVLEKIQKESGKASLADIIVLAGVVGVEKAASAAGLSIHVPFAPGRVDARQDQTDIEMFELLEPIADGFRNYRARLDVSTTESLLIDKAQQLTLTAPEMTALVGGMRVLGANFDGSKNGVFTDRVGVLSNDFFVNLLDMRYEWKATDESKELFEGRDRETGEVKFTASRADLVFGSNSVLRAVAEVYASSDAHEKFVKDFVAAWVKVMNLDRFDLL</sequence>
<keyword id="KW-0349">Heme</keyword>
<keyword id="KW-0376">Hydrogen peroxide</keyword>
<keyword id="KW-0408">Iron</keyword>
<keyword id="KW-0479">Metal-binding</keyword>
<keyword id="KW-0560">Oxidoreductase</keyword>
<keyword id="KW-0575">Peroxidase</keyword>
<accession>B1IVD5</accession>
<feature type="chain" id="PRO_0000354776" description="Catalase-peroxidase">
    <location>
        <begin position="1"/>
        <end position="726"/>
    </location>
</feature>
<feature type="region of interest" description="Disordered" evidence="2">
    <location>
        <begin position="1"/>
        <end position="33"/>
    </location>
</feature>
<feature type="active site" description="Proton acceptor" evidence="1">
    <location>
        <position position="106"/>
    </location>
</feature>
<feature type="binding site" description="axial binding residue" evidence="1">
    <location>
        <position position="267"/>
    </location>
    <ligand>
        <name>heme b</name>
        <dbReference type="ChEBI" id="CHEBI:60344"/>
    </ligand>
    <ligandPart>
        <name>Fe</name>
        <dbReference type="ChEBI" id="CHEBI:18248"/>
    </ligandPart>
</feature>
<feature type="site" description="Transition state stabilizer" evidence="1">
    <location>
        <position position="102"/>
    </location>
</feature>
<feature type="cross-link" description="Tryptophyl-tyrosyl-methioninium (Trp-Tyr) (with M-252)" evidence="1">
    <location>
        <begin position="105"/>
        <end position="226"/>
    </location>
</feature>
<feature type="cross-link" description="Tryptophyl-tyrosyl-methioninium (Tyr-Met) (with W-105)" evidence="1">
    <location>
        <begin position="226"/>
        <end position="252"/>
    </location>
</feature>